<protein>
    <recommendedName>
        <fullName>Transmembrane 6 superfamily member 1</fullName>
    </recommendedName>
</protein>
<sequence>MSAPAATGVFILSLTAIPATYTFNFFFAFNSSWPVAAGGAGILLVIAILARLLVIQKPPKDPLFYVYAVFAFTSVIGLIIGLEQDGIIDGFMTHYLKESEPYLNTAYGHMICYWDGTAHYLMYLLMVVAIAWDQNYRTIGLYWVGSILMSTIVFIPGNIVGKYGTRVCSALLLNLPYLCLPLWAGFKIYKQPSVTPNYSSKEIQNIQHKSIYRRPSDLLLALYLILATLFCIFRGMIALDCPADPCRFYIQLQEPYIKDPSAYPRLQMLVLMFYCVPYNLILLYGLLVPECTWMPDLSLISAGGIAQAQFSHIGASLHARTPYIYRVPDEARIFFFTANILYGLGSQLLAHRCVNKPEFFLKAKSGAKDK</sequence>
<name>TM6S1_XENTR</name>
<gene>
    <name type="primary">tm6sf1</name>
</gene>
<dbReference type="EMBL" id="BC121709">
    <property type="protein sequence ID" value="AAI21710.1"/>
    <property type="molecule type" value="mRNA"/>
</dbReference>
<dbReference type="EMBL" id="BC160549">
    <property type="protein sequence ID" value="AAI60549.1"/>
    <property type="molecule type" value="mRNA"/>
</dbReference>
<dbReference type="RefSeq" id="NP_001072826.1">
    <property type="nucleotide sequence ID" value="NM_001079358.1"/>
</dbReference>
<dbReference type="FunCoup" id="Q0V982">
    <property type="interactions" value="32"/>
</dbReference>
<dbReference type="STRING" id="8364.ENSXETP00000054246"/>
<dbReference type="PaxDb" id="8364-ENSXETP00000053849"/>
<dbReference type="DNASU" id="780287"/>
<dbReference type="GeneID" id="780287"/>
<dbReference type="KEGG" id="xtr:780287"/>
<dbReference type="AGR" id="Xenbase:XB-GENE-958245"/>
<dbReference type="CTD" id="53346"/>
<dbReference type="Xenbase" id="XB-GENE-958245">
    <property type="gene designation" value="tm6sf1"/>
</dbReference>
<dbReference type="eggNOG" id="ENOG502QRB2">
    <property type="taxonomic scope" value="Eukaryota"/>
</dbReference>
<dbReference type="HOGENOM" id="CLU_046717_0_0_1"/>
<dbReference type="InParanoid" id="Q0V982"/>
<dbReference type="OMA" id="FFMKPKQ"/>
<dbReference type="PhylomeDB" id="Q0V982"/>
<dbReference type="TreeFam" id="TF333088"/>
<dbReference type="Proteomes" id="UP000008143">
    <property type="component" value="Chromosome 3"/>
</dbReference>
<dbReference type="GO" id="GO:0005765">
    <property type="term" value="C:lysosomal membrane"/>
    <property type="evidence" value="ECO:0000250"/>
    <property type="project" value="UniProtKB"/>
</dbReference>
<dbReference type="CDD" id="cd21106">
    <property type="entry name" value="TM6SF1-like"/>
    <property type="match status" value="1"/>
</dbReference>
<dbReference type="InterPro" id="IPR033118">
    <property type="entry name" value="EXPERA"/>
</dbReference>
<dbReference type="InterPro" id="IPR047195">
    <property type="entry name" value="TM6SF1-like"/>
</dbReference>
<dbReference type="PANTHER" id="PTHR14568:SF10">
    <property type="entry name" value="TRANSMEMBRANE 6 SUPERFAMILY MEMBER 1"/>
    <property type="match status" value="1"/>
</dbReference>
<dbReference type="PANTHER" id="PTHR14568">
    <property type="entry name" value="TRANSMEMBRANE SUPERFAMILY 6 MEMBER 1/2"/>
    <property type="match status" value="1"/>
</dbReference>
<dbReference type="PROSITE" id="PS51751">
    <property type="entry name" value="EXPERA"/>
    <property type="match status" value="2"/>
</dbReference>
<accession>Q0V982</accession>
<accession>B1H1C1</accession>
<feature type="chain" id="PRO_0000366935" description="Transmembrane 6 superfamily member 1">
    <location>
        <begin position="1"/>
        <end position="370"/>
    </location>
</feature>
<feature type="transmembrane region" description="Helical; Name=1" evidence="3">
    <location>
        <begin position="9"/>
        <end position="29"/>
    </location>
</feature>
<feature type="transmembrane region" description="Helical; Name=2" evidence="3">
    <location>
        <begin position="35"/>
        <end position="55"/>
    </location>
</feature>
<feature type="transmembrane region" description="Helical; Name=3" evidence="3">
    <location>
        <begin position="62"/>
        <end position="82"/>
    </location>
</feature>
<feature type="transmembrane region" description="Helical; Name=4" evidence="3">
    <location>
        <begin position="110"/>
        <end position="130"/>
    </location>
</feature>
<feature type="transmembrane region" description="Helical; Name=5" evidence="3">
    <location>
        <begin position="139"/>
        <end position="159"/>
    </location>
</feature>
<feature type="transmembrane region" description="Helical; Name=6" evidence="3">
    <location>
        <begin position="168"/>
        <end position="188"/>
    </location>
</feature>
<feature type="transmembrane region" description="Helical; Name=7" evidence="3">
    <location>
        <begin position="218"/>
        <end position="238"/>
    </location>
</feature>
<feature type="transmembrane region" description="Helical; Name=8" evidence="3">
    <location>
        <begin position="268"/>
        <end position="288"/>
    </location>
</feature>
<feature type="transmembrane region" description="Helical; Name=9" evidence="3">
    <location>
        <begin position="331"/>
        <end position="351"/>
    </location>
</feature>
<feature type="domain" description="EXPERA 1" evidence="4">
    <location>
        <begin position="60"/>
        <end position="185"/>
    </location>
</feature>
<feature type="domain" description="EXPERA 2" evidence="4">
    <location>
        <begin position="216"/>
        <end position="350"/>
    </location>
</feature>
<feature type="sequence conflict" description="In Ref. 1; AAI60549." evidence="5" ref="1">
    <original>Y</original>
    <variation>H</variation>
    <location>
        <position position="198"/>
    </location>
</feature>
<organism>
    <name type="scientific">Xenopus tropicalis</name>
    <name type="common">Western clawed frog</name>
    <name type="synonym">Silurana tropicalis</name>
    <dbReference type="NCBI Taxonomy" id="8364"/>
    <lineage>
        <taxon>Eukaryota</taxon>
        <taxon>Metazoa</taxon>
        <taxon>Chordata</taxon>
        <taxon>Craniata</taxon>
        <taxon>Vertebrata</taxon>
        <taxon>Euteleostomi</taxon>
        <taxon>Amphibia</taxon>
        <taxon>Batrachia</taxon>
        <taxon>Anura</taxon>
        <taxon>Pipoidea</taxon>
        <taxon>Pipidae</taxon>
        <taxon>Xenopodinae</taxon>
        <taxon>Xenopus</taxon>
        <taxon>Silurana</taxon>
    </lineage>
</organism>
<evidence type="ECO:0000250" key="1">
    <source>
        <dbReference type="UniProtKB" id="P58749"/>
    </source>
</evidence>
<evidence type="ECO:0000250" key="2">
    <source>
        <dbReference type="UniProtKB" id="Q9BZW5"/>
    </source>
</evidence>
<evidence type="ECO:0000255" key="3"/>
<evidence type="ECO:0000255" key="4">
    <source>
        <dbReference type="PROSITE-ProRule" id="PRU01087"/>
    </source>
</evidence>
<evidence type="ECO:0000305" key="5"/>
<proteinExistence type="evidence at transcript level"/>
<keyword id="KW-0458">Lysosome</keyword>
<keyword id="KW-0472">Membrane</keyword>
<keyword id="KW-1185">Reference proteome</keyword>
<keyword id="KW-0677">Repeat</keyword>
<keyword id="KW-0812">Transmembrane</keyword>
<keyword id="KW-1133">Transmembrane helix</keyword>
<reference key="1">
    <citation type="submission" date="2008-03" db="EMBL/GenBank/DDBJ databases">
        <authorList>
            <consortium name="NIH - Xenopus Gene Collection (XGC) project"/>
        </authorList>
    </citation>
    <scope>NUCLEOTIDE SEQUENCE [LARGE SCALE MRNA]</scope>
    <source>
        <strain>N6</strain>
        <tissue>Heart</tissue>
        <tissue>Oviduct</tissue>
    </source>
</reference>
<comment type="function">
    <text evidence="2">May function as sterol isomerase.</text>
</comment>
<comment type="subcellular location">
    <subcellularLocation>
        <location evidence="1">Lysosome membrane</location>
        <topology evidence="5">Multi-pass membrane protein</topology>
    </subcellularLocation>
</comment>
<comment type="similarity">
    <text evidence="5">Belongs to the TM6SF family.</text>
</comment>